<accession>Q6FP17</accession>
<feature type="chain" id="PRO_0000445276" description="Negative regulator of PDR1-mediated fluconazole resistance JJJ1">
    <location>
        <begin position="1"/>
        <end position="623"/>
    </location>
</feature>
<feature type="domain" description="J" evidence="2">
    <location>
        <begin position="4"/>
        <end position="70"/>
    </location>
</feature>
<feature type="zinc finger region" description="C2H2-type" evidence="1">
    <location>
        <begin position="363"/>
        <end position="387"/>
    </location>
</feature>
<feature type="region of interest" description="Disordered" evidence="3">
    <location>
        <begin position="448"/>
        <end position="476"/>
    </location>
</feature>
<feature type="region of interest" description="Disordered" evidence="3">
    <location>
        <begin position="499"/>
        <end position="581"/>
    </location>
</feature>
<feature type="region of interest" description="Disordered" evidence="3">
    <location>
        <begin position="599"/>
        <end position="623"/>
    </location>
</feature>
<feature type="compositionally biased region" description="Acidic residues" evidence="3">
    <location>
        <begin position="453"/>
        <end position="466"/>
    </location>
</feature>
<feature type="compositionally biased region" description="Polar residues" evidence="3">
    <location>
        <begin position="499"/>
        <end position="508"/>
    </location>
</feature>
<feature type="compositionally biased region" description="Basic and acidic residues" evidence="3">
    <location>
        <begin position="525"/>
        <end position="538"/>
    </location>
</feature>
<feature type="compositionally biased region" description="Basic residues" evidence="3">
    <location>
        <begin position="553"/>
        <end position="564"/>
    </location>
</feature>
<feature type="compositionally biased region" description="Basic residues" evidence="3">
    <location>
        <begin position="612"/>
        <end position="623"/>
    </location>
</feature>
<sequence length="623" mass="72885">MKTCYYDLLEVRSDASDLDLKKAYRRKALQYHPDKNPDNVEEATTIFAEIRAAYEVLSDPQERAWYDSHKEQILSDTPLNPNDEDDDYVVDSTVTGVTTEELMMFFNSSLYTSIDNSPAGFYQIAGKVFAKIAKDEVSWGLRLGLDGYKNYKDMEFEEHINSRGYILACDSSKANLSNLLFPIFGYSSTSYEELKLFYTKWSSFNTLKSFTWKDEYMYSRNYDRRTKREINKRNEKARAKAKEEYIKTVKRYVNFIKKLDQRMKEGAKKAAEKRLADERLRKENEMKLRKERLNNEQGAQFHLQSWQTIDQENWKELEKQYEKEFEKRNVDKDDELIGHEFTKNQFQTNNNSQHEDVDEIIIYDCFICKKSFKSEKQLENHIKTKLHKRNLDRVQKEMKKDSMALGLDELSDYNDFDSAESETEKLYSGMDLNDIDAELKKIEEQLAQSSVTDSEDFTDDNNDTEDQNSLVDKLSNTNYDIEIDDEINDDTNEEVQISGADNSETQNAEQDHDSNGDSEEEKEDELTRILRELEESKTSRSNFSDSDEEWSNKKKTKAKKKKNKANTPDKQPVTANKNDAKEVCGECRAEFESRNQLFSHIQTEGHVSPLSKVKKGKRSKKNK</sequence>
<dbReference type="EMBL" id="CR380956">
    <property type="protein sequence ID" value="CAG60978.1"/>
    <property type="molecule type" value="Genomic_DNA"/>
</dbReference>
<dbReference type="RefSeq" id="XP_448027.1">
    <property type="nucleotide sequence ID" value="XM_448027.1"/>
</dbReference>
<dbReference type="SMR" id="Q6FP17"/>
<dbReference type="FunCoup" id="Q6FP17">
    <property type="interactions" value="953"/>
</dbReference>
<dbReference type="STRING" id="284593.Q6FP17"/>
<dbReference type="EnsemblFungi" id="CAGL0J07370g-T">
    <property type="protein sequence ID" value="CAGL0J07370g-T-p1"/>
    <property type="gene ID" value="CAGL0J07370g"/>
</dbReference>
<dbReference type="KEGG" id="cgr:2889590"/>
<dbReference type="CGD" id="CAL0129917">
    <property type="gene designation" value="JJJ1"/>
</dbReference>
<dbReference type="VEuPathDB" id="FungiDB:CAGL0J07370g"/>
<dbReference type="eggNOG" id="KOG0717">
    <property type="taxonomic scope" value="Eukaryota"/>
</dbReference>
<dbReference type="HOGENOM" id="CLU_009539_2_1_1"/>
<dbReference type="InParanoid" id="Q6FP17"/>
<dbReference type="OMA" id="RANHEES"/>
<dbReference type="Proteomes" id="UP000002428">
    <property type="component" value="Chromosome J"/>
</dbReference>
<dbReference type="GO" id="GO:0005737">
    <property type="term" value="C:cytoplasm"/>
    <property type="evidence" value="ECO:0007669"/>
    <property type="project" value="TreeGrafter"/>
</dbReference>
<dbReference type="GO" id="GO:0005634">
    <property type="term" value="C:nucleus"/>
    <property type="evidence" value="ECO:0007669"/>
    <property type="project" value="UniProtKB-SubCell"/>
</dbReference>
<dbReference type="GO" id="GO:0008270">
    <property type="term" value="F:zinc ion binding"/>
    <property type="evidence" value="ECO:0007669"/>
    <property type="project" value="UniProtKB-KW"/>
</dbReference>
<dbReference type="GO" id="GO:2001024">
    <property type="term" value="P:negative regulation of response to drug"/>
    <property type="evidence" value="ECO:0000315"/>
    <property type="project" value="CGD"/>
</dbReference>
<dbReference type="CDD" id="cd06257">
    <property type="entry name" value="DnaJ"/>
    <property type="match status" value="1"/>
</dbReference>
<dbReference type="FunFam" id="1.10.287.110:FF:000046">
    <property type="entry name" value="dnaJ homolog subfamily C member 21"/>
    <property type="match status" value="1"/>
</dbReference>
<dbReference type="FunFam" id="3.30.160.60:FF:002589">
    <property type="entry name" value="J protein JJJ1"/>
    <property type="match status" value="1"/>
</dbReference>
<dbReference type="Gene3D" id="3.30.160.60">
    <property type="entry name" value="Classic Zinc Finger"/>
    <property type="match status" value="1"/>
</dbReference>
<dbReference type="Gene3D" id="1.10.287.110">
    <property type="entry name" value="DnaJ domain"/>
    <property type="match status" value="1"/>
</dbReference>
<dbReference type="InterPro" id="IPR051964">
    <property type="entry name" value="Chaperone_stress_response"/>
</dbReference>
<dbReference type="InterPro" id="IPR001623">
    <property type="entry name" value="DnaJ_domain"/>
</dbReference>
<dbReference type="InterPro" id="IPR018253">
    <property type="entry name" value="DnaJ_domain_CS"/>
</dbReference>
<dbReference type="InterPro" id="IPR036869">
    <property type="entry name" value="J_dom_sf"/>
</dbReference>
<dbReference type="InterPro" id="IPR022755">
    <property type="entry name" value="Znf_C2H2_jaz"/>
</dbReference>
<dbReference type="InterPro" id="IPR036236">
    <property type="entry name" value="Znf_C2H2_sf"/>
</dbReference>
<dbReference type="InterPro" id="IPR013087">
    <property type="entry name" value="Znf_C2H2_type"/>
</dbReference>
<dbReference type="InterPro" id="IPR054076">
    <property type="entry name" value="ZUO1-like_ZHD"/>
</dbReference>
<dbReference type="PANTHER" id="PTHR44029">
    <property type="entry name" value="DNAJ HOMOLOG SUBFAMILY C MEMBER 21"/>
    <property type="match status" value="1"/>
</dbReference>
<dbReference type="PANTHER" id="PTHR44029:SF1">
    <property type="entry name" value="DNAJ HOMOLOG SUBFAMILY C MEMBER 21"/>
    <property type="match status" value="1"/>
</dbReference>
<dbReference type="Pfam" id="PF00226">
    <property type="entry name" value="DnaJ"/>
    <property type="match status" value="1"/>
</dbReference>
<dbReference type="Pfam" id="PF12171">
    <property type="entry name" value="zf-C2H2_jaz"/>
    <property type="match status" value="1"/>
</dbReference>
<dbReference type="Pfam" id="PF21884">
    <property type="entry name" value="ZUO1-like_ZHD"/>
    <property type="match status" value="1"/>
</dbReference>
<dbReference type="PRINTS" id="PR00625">
    <property type="entry name" value="JDOMAIN"/>
</dbReference>
<dbReference type="SMART" id="SM00271">
    <property type="entry name" value="DnaJ"/>
    <property type="match status" value="1"/>
</dbReference>
<dbReference type="SMART" id="SM00355">
    <property type="entry name" value="ZnF_C2H2"/>
    <property type="match status" value="2"/>
</dbReference>
<dbReference type="SUPFAM" id="SSF57667">
    <property type="entry name" value="beta-beta-alpha zinc fingers"/>
    <property type="match status" value="1"/>
</dbReference>
<dbReference type="SUPFAM" id="SSF46565">
    <property type="entry name" value="Chaperone J-domain"/>
    <property type="match status" value="1"/>
</dbReference>
<dbReference type="PROSITE" id="PS00636">
    <property type="entry name" value="DNAJ_1"/>
    <property type="match status" value="1"/>
</dbReference>
<dbReference type="PROSITE" id="PS50076">
    <property type="entry name" value="DNAJ_2"/>
    <property type="match status" value="1"/>
</dbReference>
<dbReference type="PROSITE" id="PS00028">
    <property type="entry name" value="ZINC_FINGER_C2H2_1"/>
    <property type="match status" value="2"/>
</dbReference>
<dbReference type="PROSITE" id="PS50157">
    <property type="entry name" value="ZINC_FINGER_C2H2_2"/>
    <property type="match status" value="1"/>
</dbReference>
<name>JJJ1_CANGA</name>
<organism>
    <name type="scientific">Candida glabrata (strain ATCC 2001 / BCRC 20586 / JCM 3761 / NBRC 0622 / NRRL Y-65 / CBS 138)</name>
    <name type="common">Yeast</name>
    <name type="synonym">Nakaseomyces glabratus</name>
    <dbReference type="NCBI Taxonomy" id="284593"/>
    <lineage>
        <taxon>Eukaryota</taxon>
        <taxon>Fungi</taxon>
        <taxon>Dikarya</taxon>
        <taxon>Ascomycota</taxon>
        <taxon>Saccharomycotina</taxon>
        <taxon>Saccharomycetes</taxon>
        <taxon>Saccharomycetales</taxon>
        <taxon>Saccharomycetaceae</taxon>
        <taxon>Nakaseomyces</taxon>
    </lineage>
</organism>
<comment type="function">
    <text evidence="4">Acts as a negative regulator of fluconazole resistance, primarily through down-regulation of the ABC transporter gene CDR1 via inactivation of the PDR1 transcriptional pathway.</text>
</comment>
<comment type="subcellular location">
    <subcellularLocation>
        <location evidence="6">Nucleus</location>
    </subcellularLocation>
</comment>
<comment type="disruption phenotype">
    <text evidence="4">Leads to fluconazole resistance and activates genes of the PDR1 regulon including CDR1, YBT1, YOR1, RSB1, RTA1, PDH1, and NCE103; as well as PDR1-independent adhesion-related genes such as EPA1, EPA2, and EPA3.</text>
</comment>
<proteinExistence type="predicted"/>
<gene>
    <name evidence="5" type="primary">JJJ1</name>
    <name type="ordered locus">CAGL0J07370g</name>
</gene>
<keyword id="KW-0479">Metal-binding</keyword>
<keyword id="KW-0539">Nucleus</keyword>
<keyword id="KW-1185">Reference proteome</keyword>
<keyword id="KW-0862">Zinc</keyword>
<keyword id="KW-0863">Zinc-finger</keyword>
<protein>
    <recommendedName>
        <fullName evidence="5">Negative regulator of PDR1-mediated fluconazole resistance JJJ1</fullName>
    </recommendedName>
    <alternativeName>
        <fullName evidence="5">J protein JJJ1</fullName>
    </alternativeName>
</protein>
<reference key="1">
    <citation type="journal article" date="2004" name="Nature">
        <title>Genome evolution in yeasts.</title>
        <authorList>
            <person name="Dujon B."/>
            <person name="Sherman D."/>
            <person name="Fischer G."/>
            <person name="Durrens P."/>
            <person name="Casaregola S."/>
            <person name="Lafontaine I."/>
            <person name="de Montigny J."/>
            <person name="Marck C."/>
            <person name="Neuveglise C."/>
            <person name="Talla E."/>
            <person name="Goffard N."/>
            <person name="Frangeul L."/>
            <person name="Aigle M."/>
            <person name="Anthouard V."/>
            <person name="Babour A."/>
            <person name="Barbe V."/>
            <person name="Barnay S."/>
            <person name="Blanchin S."/>
            <person name="Beckerich J.-M."/>
            <person name="Beyne E."/>
            <person name="Bleykasten C."/>
            <person name="Boisrame A."/>
            <person name="Boyer J."/>
            <person name="Cattolico L."/>
            <person name="Confanioleri F."/>
            <person name="de Daruvar A."/>
            <person name="Despons L."/>
            <person name="Fabre E."/>
            <person name="Fairhead C."/>
            <person name="Ferry-Dumazet H."/>
            <person name="Groppi A."/>
            <person name="Hantraye F."/>
            <person name="Hennequin C."/>
            <person name="Jauniaux N."/>
            <person name="Joyet P."/>
            <person name="Kachouri R."/>
            <person name="Kerrest A."/>
            <person name="Koszul R."/>
            <person name="Lemaire M."/>
            <person name="Lesur I."/>
            <person name="Ma L."/>
            <person name="Muller H."/>
            <person name="Nicaud J.-M."/>
            <person name="Nikolski M."/>
            <person name="Oztas S."/>
            <person name="Ozier-Kalogeropoulos O."/>
            <person name="Pellenz S."/>
            <person name="Potier S."/>
            <person name="Richard G.-F."/>
            <person name="Straub M.-L."/>
            <person name="Suleau A."/>
            <person name="Swennen D."/>
            <person name="Tekaia F."/>
            <person name="Wesolowski-Louvel M."/>
            <person name="Westhof E."/>
            <person name="Wirth B."/>
            <person name="Zeniou-Meyer M."/>
            <person name="Zivanovic Y."/>
            <person name="Bolotin-Fukuhara M."/>
            <person name="Thierry A."/>
            <person name="Bouchier C."/>
            <person name="Caudron B."/>
            <person name="Scarpelli C."/>
            <person name="Gaillardin C."/>
            <person name="Weissenbach J."/>
            <person name="Wincker P."/>
            <person name="Souciet J.-L."/>
        </authorList>
    </citation>
    <scope>NUCLEOTIDE SEQUENCE [LARGE SCALE GENOMIC DNA]</scope>
    <source>
        <strain>ATCC 2001 / BCRC 20586 / JCM 3761 / NBRC 0622 / NRRL Y-65 / CBS 138</strain>
    </source>
</reference>
<reference key="2">
    <citation type="journal article" date="2018" name="MSphere">
        <title>Jjj1 is a negative regulator of Pdr1-mediated fluconazole resistance in Candida glabrata.</title>
        <authorList>
            <person name="Whaley S.G."/>
            <person name="Caudle K.E."/>
            <person name="Simonicova L."/>
            <person name="Zhang Q."/>
            <person name="Moye-Rowley W.S."/>
            <person name="Rogers P.D."/>
        </authorList>
    </citation>
    <scope>FUNCTION</scope>
    <scope>DISRUPTION PHENOTYPE</scope>
</reference>
<evidence type="ECO:0000255" key="1">
    <source>
        <dbReference type="PROSITE-ProRule" id="PRU00042"/>
    </source>
</evidence>
<evidence type="ECO:0000255" key="2">
    <source>
        <dbReference type="PROSITE-ProRule" id="PRU00286"/>
    </source>
</evidence>
<evidence type="ECO:0000256" key="3">
    <source>
        <dbReference type="SAM" id="MobiDB-lite"/>
    </source>
</evidence>
<evidence type="ECO:0000269" key="4">
    <source>
    </source>
</evidence>
<evidence type="ECO:0000303" key="5">
    <source>
    </source>
</evidence>
<evidence type="ECO:0000305" key="6"/>